<sequence>MKNTYNLRSITAKAINQVLDQGQSLSTVLPKLQQNITDKDKPLLQELSFGVLRVLPQLEWIIGQLMVKPLKGKQRILHYLLMVGIYQLAYTRIPAHAALAETVNGAVTLKHSQLKGLINGVLRQFQRQQLQLMECTQNNSSHHLHPEWLLTRIQKAYPQQWQQLINANNKKPPMWLRVNRIYHSRDEYLTLLRKSGIDAEPAPKSPSAIRIISPCPVTILPGFDKGWVTVQDLSAQECVELLKPINGEKILDLCAAPGGKTTYILEIAPESQVVAVDIDEQRIKRVKENLKRLNCHATVKTGDGRHPEHWAENQQFDRILLDAPCSATGVIRRHPDIKWLRREEDIAQLVQLQSEILDAIWPYLKKSGTLVYATCSILPDENCQQISSFLKRHSDAKLAGTETNDCLGKQIIPELNGGDGFFYARLTKR</sequence>
<evidence type="ECO:0000255" key="1">
    <source>
        <dbReference type="HAMAP-Rule" id="MF_01856"/>
    </source>
</evidence>
<keyword id="KW-0963">Cytoplasm</keyword>
<keyword id="KW-0489">Methyltransferase</keyword>
<keyword id="KW-1185">Reference proteome</keyword>
<keyword id="KW-0694">RNA-binding</keyword>
<keyword id="KW-0698">rRNA processing</keyword>
<keyword id="KW-0949">S-adenosyl-L-methionine</keyword>
<keyword id="KW-0808">Transferase</keyword>
<protein>
    <recommendedName>
        <fullName evidence="1">Ribosomal RNA small subunit methyltransferase B</fullName>
        <ecNumber evidence="1">2.1.1.176</ecNumber>
    </recommendedName>
    <alternativeName>
        <fullName evidence="1">16S rRNA m5C967 methyltransferase</fullName>
    </alternativeName>
    <alternativeName>
        <fullName evidence="1">rRNA (cytosine-C(5)-)-methyltransferase RsmB</fullName>
    </alternativeName>
</protein>
<name>RSMB_PHOLL</name>
<gene>
    <name evidence="1" type="primary">rsmB</name>
    <name type="synonym">rrmB</name>
    <name evidence="1" type="synonym">sun</name>
    <name type="ordered locus">plu4697</name>
</gene>
<organism>
    <name type="scientific">Photorhabdus laumondii subsp. laumondii (strain DSM 15139 / CIP 105565 / TT01)</name>
    <name type="common">Photorhabdus luminescens subsp. laumondii</name>
    <dbReference type="NCBI Taxonomy" id="243265"/>
    <lineage>
        <taxon>Bacteria</taxon>
        <taxon>Pseudomonadati</taxon>
        <taxon>Pseudomonadota</taxon>
        <taxon>Gammaproteobacteria</taxon>
        <taxon>Enterobacterales</taxon>
        <taxon>Morganellaceae</taxon>
        <taxon>Photorhabdus</taxon>
    </lineage>
</organism>
<feature type="chain" id="PRO_0000211798" description="Ribosomal RNA small subunit methyltransferase B">
    <location>
        <begin position="1"/>
        <end position="429"/>
    </location>
</feature>
<feature type="active site" description="Nucleophile" evidence="1">
    <location>
        <position position="375"/>
    </location>
</feature>
<feature type="binding site" evidence="1">
    <location>
        <begin position="254"/>
        <end position="260"/>
    </location>
    <ligand>
        <name>S-adenosyl-L-methionine</name>
        <dbReference type="ChEBI" id="CHEBI:59789"/>
    </ligand>
</feature>
<feature type="binding site" evidence="1">
    <location>
        <position position="277"/>
    </location>
    <ligand>
        <name>S-adenosyl-L-methionine</name>
        <dbReference type="ChEBI" id="CHEBI:59789"/>
    </ligand>
</feature>
<feature type="binding site" evidence="1">
    <location>
        <position position="303"/>
    </location>
    <ligand>
        <name>S-adenosyl-L-methionine</name>
        <dbReference type="ChEBI" id="CHEBI:59789"/>
    </ligand>
</feature>
<feature type="binding site" evidence="1">
    <location>
        <position position="322"/>
    </location>
    <ligand>
        <name>S-adenosyl-L-methionine</name>
        <dbReference type="ChEBI" id="CHEBI:59789"/>
    </ligand>
</feature>
<comment type="function">
    <text evidence="1">Specifically methylates the cytosine at position 967 (m5C967) of 16S rRNA.</text>
</comment>
<comment type="catalytic activity">
    <reaction evidence="1">
        <text>cytidine(967) in 16S rRNA + S-adenosyl-L-methionine = 5-methylcytidine(967) in 16S rRNA + S-adenosyl-L-homocysteine + H(+)</text>
        <dbReference type="Rhea" id="RHEA:42748"/>
        <dbReference type="Rhea" id="RHEA-COMP:10219"/>
        <dbReference type="Rhea" id="RHEA-COMP:10220"/>
        <dbReference type="ChEBI" id="CHEBI:15378"/>
        <dbReference type="ChEBI" id="CHEBI:57856"/>
        <dbReference type="ChEBI" id="CHEBI:59789"/>
        <dbReference type="ChEBI" id="CHEBI:74483"/>
        <dbReference type="ChEBI" id="CHEBI:82748"/>
        <dbReference type="EC" id="2.1.1.176"/>
    </reaction>
</comment>
<comment type="subcellular location">
    <subcellularLocation>
        <location evidence="1">Cytoplasm</location>
    </subcellularLocation>
</comment>
<comment type="similarity">
    <text evidence="1">Belongs to the class I-like SAM-binding methyltransferase superfamily. RsmB/NOP family.</text>
</comment>
<reference key="1">
    <citation type="journal article" date="2003" name="Nat. Biotechnol.">
        <title>The genome sequence of the entomopathogenic bacterium Photorhabdus luminescens.</title>
        <authorList>
            <person name="Duchaud E."/>
            <person name="Rusniok C."/>
            <person name="Frangeul L."/>
            <person name="Buchrieser C."/>
            <person name="Givaudan A."/>
            <person name="Taourit S."/>
            <person name="Bocs S."/>
            <person name="Boursaux-Eude C."/>
            <person name="Chandler M."/>
            <person name="Charles J.-F."/>
            <person name="Dassa E."/>
            <person name="Derose R."/>
            <person name="Derzelle S."/>
            <person name="Freyssinet G."/>
            <person name="Gaudriault S."/>
            <person name="Medigue C."/>
            <person name="Lanois A."/>
            <person name="Powell K."/>
            <person name="Siguier P."/>
            <person name="Vincent R."/>
            <person name="Wingate V."/>
            <person name="Zouine M."/>
            <person name="Glaser P."/>
            <person name="Boemare N."/>
            <person name="Danchin A."/>
            <person name="Kunst F."/>
        </authorList>
    </citation>
    <scope>NUCLEOTIDE SEQUENCE [LARGE SCALE GENOMIC DNA]</scope>
    <source>
        <strain>DSM 15139 / CIP 105565 / TT01</strain>
    </source>
</reference>
<proteinExistence type="inferred from homology"/>
<dbReference type="EC" id="2.1.1.176" evidence="1"/>
<dbReference type="EMBL" id="BX571874">
    <property type="protein sequence ID" value="CAE17069.1"/>
    <property type="molecule type" value="Genomic_DNA"/>
</dbReference>
<dbReference type="RefSeq" id="WP_011148767.1">
    <property type="nucleotide sequence ID" value="NC_005126.1"/>
</dbReference>
<dbReference type="SMR" id="Q7MYI0"/>
<dbReference type="STRING" id="243265.plu4697"/>
<dbReference type="GeneID" id="48850921"/>
<dbReference type="KEGG" id="plu:plu4697"/>
<dbReference type="eggNOG" id="COG0144">
    <property type="taxonomic scope" value="Bacteria"/>
</dbReference>
<dbReference type="eggNOG" id="COG0781">
    <property type="taxonomic scope" value="Bacteria"/>
</dbReference>
<dbReference type="HOGENOM" id="CLU_005316_0_4_6"/>
<dbReference type="OrthoDB" id="9810297at2"/>
<dbReference type="Proteomes" id="UP000002514">
    <property type="component" value="Chromosome"/>
</dbReference>
<dbReference type="GO" id="GO:0005829">
    <property type="term" value="C:cytosol"/>
    <property type="evidence" value="ECO:0007669"/>
    <property type="project" value="TreeGrafter"/>
</dbReference>
<dbReference type="GO" id="GO:0003723">
    <property type="term" value="F:RNA binding"/>
    <property type="evidence" value="ECO:0007669"/>
    <property type="project" value="UniProtKB-KW"/>
</dbReference>
<dbReference type="GO" id="GO:0009383">
    <property type="term" value="F:rRNA (cytosine-C5-)-methyltransferase activity"/>
    <property type="evidence" value="ECO:0007669"/>
    <property type="project" value="TreeGrafter"/>
</dbReference>
<dbReference type="GO" id="GO:0006355">
    <property type="term" value="P:regulation of DNA-templated transcription"/>
    <property type="evidence" value="ECO:0007669"/>
    <property type="project" value="InterPro"/>
</dbReference>
<dbReference type="GO" id="GO:0070475">
    <property type="term" value="P:rRNA base methylation"/>
    <property type="evidence" value="ECO:0007669"/>
    <property type="project" value="TreeGrafter"/>
</dbReference>
<dbReference type="CDD" id="cd02440">
    <property type="entry name" value="AdoMet_MTases"/>
    <property type="match status" value="1"/>
</dbReference>
<dbReference type="CDD" id="cd00620">
    <property type="entry name" value="Methyltransferase_Sun"/>
    <property type="match status" value="1"/>
</dbReference>
<dbReference type="FunFam" id="1.10.940.10:FF:000002">
    <property type="entry name" value="Ribosomal RNA small subunit methyltransferase B"/>
    <property type="match status" value="1"/>
</dbReference>
<dbReference type="FunFam" id="3.30.70.1170:FF:000002">
    <property type="entry name" value="Ribosomal RNA small subunit methyltransferase B"/>
    <property type="match status" value="1"/>
</dbReference>
<dbReference type="FunFam" id="3.40.50.150:FF:000022">
    <property type="entry name" value="Ribosomal RNA small subunit methyltransferase B"/>
    <property type="match status" value="1"/>
</dbReference>
<dbReference type="Gene3D" id="1.10.287.730">
    <property type="entry name" value="Helix hairpin bin"/>
    <property type="match status" value="1"/>
</dbReference>
<dbReference type="Gene3D" id="1.10.940.10">
    <property type="entry name" value="NusB-like"/>
    <property type="match status" value="1"/>
</dbReference>
<dbReference type="Gene3D" id="3.30.70.1170">
    <property type="entry name" value="Sun protein, domain 3"/>
    <property type="match status" value="1"/>
</dbReference>
<dbReference type="Gene3D" id="3.40.50.150">
    <property type="entry name" value="Vaccinia Virus protein VP39"/>
    <property type="match status" value="1"/>
</dbReference>
<dbReference type="HAMAP" id="MF_01856">
    <property type="entry name" value="16SrRNA_methyltr_B"/>
    <property type="match status" value="1"/>
</dbReference>
<dbReference type="InterPro" id="IPR049560">
    <property type="entry name" value="MeTrfase_RsmB-F_NOP2_cat"/>
</dbReference>
<dbReference type="InterPro" id="IPR001678">
    <property type="entry name" value="MeTrfase_RsmB-F_NOP2_dom"/>
</dbReference>
<dbReference type="InterPro" id="IPR035926">
    <property type="entry name" value="NusB-like_sf"/>
</dbReference>
<dbReference type="InterPro" id="IPR006027">
    <property type="entry name" value="NusB_RsmB_TIM44"/>
</dbReference>
<dbReference type="InterPro" id="IPR023267">
    <property type="entry name" value="RCMT"/>
</dbReference>
<dbReference type="InterPro" id="IPR004573">
    <property type="entry name" value="rRNA_ssu_MeTfrase_B"/>
</dbReference>
<dbReference type="InterPro" id="IPR023541">
    <property type="entry name" value="rRNA_ssu_MeTfrase_B_ent"/>
</dbReference>
<dbReference type="InterPro" id="IPR054728">
    <property type="entry name" value="RsmB-like_ferredoxin"/>
</dbReference>
<dbReference type="InterPro" id="IPR048019">
    <property type="entry name" value="RsmB-like_N"/>
</dbReference>
<dbReference type="InterPro" id="IPR018314">
    <property type="entry name" value="RsmB/NOL1/NOP2-like_CS"/>
</dbReference>
<dbReference type="InterPro" id="IPR029063">
    <property type="entry name" value="SAM-dependent_MTases_sf"/>
</dbReference>
<dbReference type="NCBIfam" id="NF008149">
    <property type="entry name" value="PRK10901.1"/>
    <property type="match status" value="1"/>
</dbReference>
<dbReference type="NCBIfam" id="NF011494">
    <property type="entry name" value="PRK14902.1"/>
    <property type="match status" value="1"/>
</dbReference>
<dbReference type="NCBIfam" id="TIGR00563">
    <property type="entry name" value="rsmB"/>
    <property type="match status" value="1"/>
</dbReference>
<dbReference type="PANTHER" id="PTHR22807:SF61">
    <property type="entry name" value="NOL1_NOP2_SUN FAMILY PROTEIN _ ANTITERMINATION NUSB DOMAIN-CONTAINING PROTEIN"/>
    <property type="match status" value="1"/>
</dbReference>
<dbReference type="PANTHER" id="PTHR22807">
    <property type="entry name" value="NOP2 YEAST -RELATED NOL1/NOP2/FMU SUN DOMAIN-CONTAINING"/>
    <property type="match status" value="1"/>
</dbReference>
<dbReference type="Pfam" id="PF01189">
    <property type="entry name" value="Methyltr_RsmB-F"/>
    <property type="match status" value="1"/>
</dbReference>
<dbReference type="Pfam" id="PF01029">
    <property type="entry name" value="NusB"/>
    <property type="match status" value="1"/>
</dbReference>
<dbReference type="Pfam" id="PF22458">
    <property type="entry name" value="RsmF-B_ferredox"/>
    <property type="match status" value="1"/>
</dbReference>
<dbReference type="PRINTS" id="PR02008">
    <property type="entry name" value="RCMTFAMILY"/>
</dbReference>
<dbReference type="SUPFAM" id="SSF48013">
    <property type="entry name" value="NusB-like"/>
    <property type="match status" value="1"/>
</dbReference>
<dbReference type="SUPFAM" id="SSF53335">
    <property type="entry name" value="S-adenosyl-L-methionine-dependent methyltransferases"/>
    <property type="match status" value="1"/>
</dbReference>
<dbReference type="PROSITE" id="PS01153">
    <property type="entry name" value="NOL1_NOP2_SUN"/>
    <property type="match status" value="1"/>
</dbReference>
<dbReference type="PROSITE" id="PS51686">
    <property type="entry name" value="SAM_MT_RSMB_NOP"/>
    <property type="match status" value="1"/>
</dbReference>
<accession>Q7MYI0</accession>